<name>YOHF_ECOLI</name>
<comment type="similarity">
    <text evidence="3">Belongs to the short-chain dehydrogenases/reductases (SDR) family.</text>
</comment>
<comment type="sequence caution" evidence="3">
    <conflict type="frameshift">
        <sequence resource="EMBL-CDS" id="AAA60499"/>
    </conflict>
    <text>Produces two separate ORFs.</text>
</comment>
<accession>P33368</accession>
<accession>P33367</accession>
<accession>P76437</accession>
<accession>Q2MAU2</accession>
<proteinExistence type="evidence at protein level"/>
<protein>
    <recommendedName>
        <fullName>Uncharacterized oxidoreductase YohF</fullName>
        <ecNumber>1.-.-.-</ecNumber>
    </recommendedName>
</protein>
<sequence>MAQVAIITASDSGIGKECALLLAQQGFDIGITWHSDEEGAKDTAREVVSHGVRAEIVQLDLGNLPEGALALEKLIQRLGRIDVLVNNAGAMTKAPFLDMAFDEWRKIFTVDVDGAFLCSQIAARQMVKQGQGGRIINITSVHEHTPLPDASAYTAAKHALGGLTKAMALELVRHKILVNAVAPGAIATPMNGMDDSDVKPDAEPSIPLRRFGATHEIASLVVWLCSEGANYTTGQSLIVDGGFMLANPQFNPE</sequence>
<dbReference type="EC" id="1.-.-.-"/>
<dbReference type="EMBL" id="U00007">
    <property type="protein sequence ID" value="AAA60500.1"/>
    <property type="status" value="ALT_FRAME"/>
    <property type="molecule type" value="Genomic_DNA"/>
</dbReference>
<dbReference type="EMBL" id="U00007">
    <property type="protein sequence ID" value="AAA60499.1"/>
    <property type="status" value="ALT_FRAME"/>
    <property type="molecule type" value="Genomic_DNA"/>
</dbReference>
<dbReference type="EMBL" id="U00096">
    <property type="protein sequence ID" value="AAC75198.1"/>
    <property type="molecule type" value="Genomic_DNA"/>
</dbReference>
<dbReference type="EMBL" id="AP009048">
    <property type="protein sequence ID" value="BAE76614.1"/>
    <property type="molecule type" value="Genomic_DNA"/>
</dbReference>
<dbReference type="PIR" id="H64981">
    <property type="entry name" value="H64981"/>
</dbReference>
<dbReference type="RefSeq" id="NP_416641.1">
    <property type="nucleotide sequence ID" value="NC_000913.3"/>
</dbReference>
<dbReference type="RefSeq" id="WP_000079538.1">
    <property type="nucleotide sequence ID" value="NZ_LN832404.1"/>
</dbReference>
<dbReference type="PDB" id="6OZ7">
    <property type="method" value="X-ray"/>
    <property type="resolution" value="1.36 A"/>
    <property type="chains" value="A/B/C/D/E/F/G/H=2-253"/>
</dbReference>
<dbReference type="PDBsum" id="6OZ7"/>
<dbReference type="SMR" id="P33368"/>
<dbReference type="BioGRID" id="4260454">
    <property type="interactions" value="23"/>
</dbReference>
<dbReference type="DIP" id="DIP-12806N"/>
<dbReference type="FunCoup" id="P33368">
    <property type="interactions" value="198"/>
</dbReference>
<dbReference type="IntAct" id="P33368">
    <property type="interactions" value="6"/>
</dbReference>
<dbReference type="STRING" id="511145.b2137"/>
<dbReference type="jPOST" id="P33368"/>
<dbReference type="PaxDb" id="511145-b2137"/>
<dbReference type="EnsemblBacteria" id="AAC75198">
    <property type="protein sequence ID" value="AAC75198"/>
    <property type="gene ID" value="b2137"/>
</dbReference>
<dbReference type="GeneID" id="949126"/>
<dbReference type="KEGG" id="ecj:JW2125"/>
<dbReference type="KEGG" id="eco:b2137"/>
<dbReference type="KEGG" id="ecoc:C3026_11980"/>
<dbReference type="PATRIC" id="fig|1411691.4.peg.105"/>
<dbReference type="EchoBASE" id="EB1955"/>
<dbReference type="eggNOG" id="COG1028">
    <property type="taxonomic scope" value="Bacteria"/>
</dbReference>
<dbReference type="HOGENOM" id="CLU_010194_1_3_6"/>
<dbReference type="InParanoid" id="P33368"/>
<dbReference type="OMA" id="TWHAWQK"/>
<dbReference type="OrthoDB" id="286404at2"/>
<dbReference type="PhylomeDB" id="P33368"/>
<dbReference type="BioCyc" id="EcoCyc:EG12019-MONOMER"/>
<dbReference type="PRO" id="PR:P33368"/>
<dbReference type="Proteomes" id="UP000000625">
    <property type="component" value="Chromosome"/>
</dbReference>
<dbReference type="GO" id="GO:0016491">
    <property type="term" value="F:oxidoreductase activity"/>
    <property type="evidence" value="ECO:0007669"/>
    <property type="project" value="UniProtKB-KW"/>
</dbReference>
<dbReference type="GO" id="GO:0006629">
    <property type="term" value="P:lipid metabolic process"/>
    <property type="evidence" value="ECO:0007669"/>
    <property type="project" value="UniProtKB-ARBA"/>
</dbReference>
<dbReference type="GO" id="GO:0032787">
    <property type="term" value="P:monocarboxylic acid metabolic process"/>
    <property type="evidence" value="ECO:0007669"/>
    <property type="project" value="UniProtKB-ARBA"/>
</dbReference>
<dbReference type="FunFam" id="3.40.50.720:FF:000084">
    <property type="entry name" value="Short-chain dehydrogenase reductase"/>
    <property type="match status" value="1"/>
</dbReference>
<dbReference type="Gene3D" id="3.40.50.720">
    <property type="entry name" value="NAD(P)-binding Rossmann-like Domain"/>
    <property type="match status" value="1"/>
</dbReference>
<dbReference type="InterPro" id="IPR036291">
    <property type="entry name" value="NAD(P)-bd_dom_sf"/>
</dbReference>
<dbReference type="InterPro" id="IPR020904">
    <property type="entry name" value="Sc_DH/Rdtase_CS"/>
</dbReference>
<dbReference type="InterPro" id="IPR050259">
    <property type="entry name" value="SDR"/>
</dbReference>
<dbReference type="InterPro" id="IPR002347">
    <property type="entry name" value="SDR_fam"/>
</dbReference>
<dbReference type="NCBIfam" id="NF009384">
    <property type="entry name" value="PRK12743.1"/>
    <property type="match status" value="1"/>
</dbReference>
<dbReference type="PANTHER" id="PTHR42879">
    <property type="entry name" value="3-OXOACYL-(ACYL-CARRIER-PROTEIN) REDUCTASE"/>
    <property type="match status" value="1"/>
</dbReference>
<dbReference type="PANTHER" id="PTHR42879:SF2">
    <property type="entry name" value="3-OXOACYL-[ACYL-CARRIER-PROTEIN] REDUCTASE FABG"/>
    <property type="match status" value="1"/>
</dbReference>
<dbReference type="Pfam" id="PF13561">
    <property type="entry name" value="adh_short_C2"/>
    <property type="match status" value="1"/>
</dbReference>
<dbReference type="PRINTS" id="PR00081">
    <property type="entry name" value="GDHRDH"/>
</dbReference>
<dbReference type="PRINTS" id="PR00080">
    <property type="entry name" value="SDRFAMILY"/>
</dbReference>
<dbReference type="SUPFAM" id="SSF51735">
    <property type="entry name" value="NAD(P)-binding Rossmann-fold domains"/>
    <property type="match status" value="1"/>
</dbReference>
<dbReference type="PROSITE" id="PS00061">
    <property type="entry name" value="ADH_SHORT"/>
    <property type="match status" value="1"/>
</dbReference>
<feature type="chain" id="PRO_0000054840" description="Uncharacterized oxidoreductase YohF">
    <location>
        <begin position="1"/>
        <end position="253"/>
    </location>
</feature>
<feature type="active site" description="Proton acceptor" evidence="2">
    <location>
        <position position="153"/>
    </location>
</feature>
<feature type="binding site" evidence="1">
    <location>
        <begin position="6"/>
        <end position="30"/>
    </location>
    <ligand>
        <name>NADP(+)</name>
        <dbReference type="ChEBI" id="CHEBI:58349"/>
    </ligand>
</feature>
<feature type="binding site" evidence="1">
    <location>
        <position position="140"/>
    </location>
    <ligand>
        <name>substrate</name>
    </ligand>
</feature>
<feature type="strand" evidence="4">
    <location>
        <begin position="4"/>
        <end position="9"/>
    </location>
</feature>
<feature type="helix" evidence="4">
    <location>
        <begin position="14"/>
        <end position="24"/>
    </location>
</feature>
<feature type="strand" evidence="4">
    <location>
        <begin position="28"/>
        <end position="35"/>
    </location>
</feature>
<feature type="helix" evidence="4">
    <location>
        <begin position="37"/>
        <end position="48"/>
    </location>
</feature>
<feature type="turn" evidence="4">
    <location>
        <begin position="49"/>
        <end position="51"/>
    </location>
</feature>
<feature type="strand" evidence="4">
    <location>
        <begin position="54"/>
        <end position="58"/>
    </location>
</feature>
<feature type="helix" evidence="4">
    <location>
        <begin position="61"/>
        <end position="63"/>
    </location>
</feature>
<feature type="helix" evidence="4">
    <location>
        <begin position="66"/>
        <end position="69"/>
    </location>
</feature>
<feature type="helix" evidence="4">
    <location>
        <begin position="70"/>
        <end position="78"/>
    </location>
</feature>
<feature type="strand" evidence="4">
    <location>
        <begin position="82"/>
        <end position="86"/>
    </location>
</feature>
<feature type="turn" evidence="4">
    <location>
        <begin position="96"/>
        <end position="98"/>
    </location>
</feature>
<feature type="helix" evidence="4">
    <location>
        <begin position="101"/>
        <end position="111"/>
    </location>
</feature>
<feature type="helix" evidence="4">
    <location>
        <begin position="113"/>
        <end position="129"/>
    </location>
</feature>
<feature type="strand" evidence="4">
    <location>
        <begin position="133"/>
        <end position="138"/>
    </location>
</feature>
<feature type="helix" evidence="4">
    <location>
        <begin position="141"/>
        <end position="143"/>
    </location>
</feature>
<feature type="strand" evidence="4">
    <location>
        <begin position="148"/>
        <end position="150"/>
    </location>
</feature>
<feature type="helix" evidence="4">
    <location>
        <begin position="151"/>
        <end position="171"/>
    </location>
</feature>
<feature type="helix" evidence="4">
    <location>
        <begin position="172"/>
        <end position="174"/>
    </location>
</feature>
<feature type="strand" evidence="4">
    <location>
        <begin position="176"/>
        <end position="183"/>
    </location>
</feature>
<feature type="helix" evidence="4">
    <location>
        <begin position="214"/>
        <end position="224"/>
    </location>
</feature>
<feature type="helix" evidence="4">
    <location>
        <begin position="227"/>
        <end position="229"/>
    </location>
</feature>
<feature type="strand" evidence="4">
    <location>
        <begin position="236"/>
        <end position="240"/>
    </location>
</feature>
<feature type="helix" evidence="4">
    <location>
        <begin position="243"/>
        <end position="245"/>
    </location>
</feature>
<feature type="turn" evidence="4">
    <location>
        <begin position="248"/>
        <end position="250"/>
    </location>
</feature>
<gene>
    <name type="primary">yohF</name>
    <name type="synonym">yohE</name>
    <name type="ordered locus">b2137</name>
    <name type="ordered locus">JW2125</name>
</gene>
<evidence type="ECO:0000250" key="1"/>
<evidence type="ECO:0000255" key="2">
    <source>
        <dbReference type="PROSITE-ProRule" id="PRU10001"/>
    </source>
</evidence>
<evidence type="ECO:0000305" key="3"/>
<evidence type="ECO:0007829" key="4">
    <source>
        <dbReference type="PDB" id="6OZ7"/>
    </source>
</evidence>
<keyword id="KW-0002">3D-structure</keyword>
<keyword id="KW-0560">Oxidoreductase</keyword>
<keyword id="KW-1185">Reference proteome</keyword>
<organism>
    <name type="scientific">Escherichia coli (strain K12)</name>
    <dbReference type="NCBI Taxonomy" id="83333"/>
    <lineage>
        <taxon>Bacteria</taxon>
        <taxon>Pseudomonadati</taxon>
        <taxon>Pseudomonadota</taxon>
        <taxon>Gammaproteobacteria</taxon>
        <taxon>Enterobacterales</taxon>
        <taxon>Enterobacteriaceae</taxon>
        <taxon>Escherichia</taxon>
    </lineage>
</organism>
<reference key="1">
    <citation type="submission" date="1993-10" db="EMBL/GenBank/DDBJ databases">
        <title>Automated multiplex sequencing of the E.coli genome.</title>
        <authorList>
            <person name="Richterich P."/>
            <person name="Lakey N."/>
            <person name="Gryan G."/>
            <person name="Jaehn L."/>
            <person name="Mintz L."/>
            <person name="Robison K."/>
            <person name="Church G.M."/>
        </authorList>
    </citation>
    <scope>NUCLEOTIDE SEQUENCE [LARGE SCALE GENOMIC DNA]</scope>
    <source>
        <strain>K12 / BHB2600</strain>
    </source>
</reference>
<reference key="2">
    <citation type="journal article" date="1997" name="Science">
        <title>The complete genome sequence of Escherichia coli K-12.</title>
        <authorList>
            <person name="Blattner F.R."/>
            <person name="Plunkett G. III"/>
            <person name="Bloch C.A."/>
            <person name="Perna N.T."/>
            <person name="Burland V."/>
            <person name="Riley M."/>
            <person name="Collado-Vides J."/>
            <person name="Glasner J.D."/>
            <person name="Rode C.K."/>
            <person name="Mayhew G.F."/>
            <person name="Gregor J."/>
            <person name="Davis N.W."/>
            <person name="Kirkpatrick H.A."/>
            <person name="Goeden M.A."/>
            <person name="Rose D.J."/>
            <person name="Mau B."/>
            <person name="Shao Y."/>
        </authorList>
    </citation>
    <scope>NUCLEOTIDE SEQUENCE [LARGE SCALE GENOMIC DNA]</scope>
    <source>
        <strain>K12 / MG1655 / ATCC 47076</strain>
    </source>
</reference>
<reference key="3">
    <citation type="journal article" date="2006" name="Mol. Syst. Biol.">
        <title>Highly accurate genome sequences of Escherichia coli K-12 strains MG1655 and W3110.</title>
        <authorList>
            <person name="Hayashi K."/>
            <person name="Morooka N."/>
            <person name="Yamamoto Y."/>
            <person name="Fujita K."/>
            <person name="Isono K."/>
            <person name="Choi S."/>
            <person name="Ohtsubo E."/>
            <person name="Baba T."/>
            <person name="Wanner B.L."/>
            <person name="Mori H."/>
            <person name="Horiuchi T."/>
        </authorList>
    </citation>
    <scope>NUCLEOTIDE SEQUENCE [LARGE SCALE GENOMIC DNA]</scope>
    <source>
        <strain>K12 / W3110 / ATCC 27325 / DSM 5911</strain>
    </source>
</reference>